<gene>
    <name type="primary">pks5</name>
    <name type="ORF">DDB_G0271520</name>
</gene>
<evidence type="ECO:0000250" key="1"/>
<evidence type="ECO:0000255" key="2">
    <source>
        <dbReference type="PROSITE-ProRule" id="PRU00258"/>
    </source>
</evidence>
<evidence type="ECO:0000255" key="3">
    <source>
        <dbReference type="PROSITE-ProRule" id="PRU01348"/>
    </source>
</evidence>
<evidence type="ECO:0000255" key="4">
    <source>
        <dbReference type="PROSITE-ProRule" id="PRU01363"/>
    </source>
</evidence>
<evidence type="ECO:0000255" key="5">
    <source>
        <dbReference type="PROSITE-ProRule" id="PRU10022"/>
    </source>
</evidence>
<evidence type="ECO:0000269" key="6">
    <source>
    </source>
</evidence>
<reference key="1">
    <citation type="journal article" date="2002" name="Nature">
        <title>Sequence and analysis of chromosome 2 of Dictyostelium discoideum.</title>
        <authorList>
            <person name="Gloeckner G."/>
            <person name="Eichinger L."/>
            <person name="Szafranski K."/>
            <person name="Pachebat J.A."/>
            <person name="Bankier A.T."/>
            <person name="Dear P.H."/>
            <person name="Lehmann R."/>
            <person name="Baumgart C."/>
            <person name="Parra G."/>
            <person name="Abril J.F."/>
            <person name="Guigo R."/>
            <person name="Kumpf K."/>
            <person name="Tunggal B."/>
            <person name="Cox E.C."/>
            <person name="Quail M.A."/>
            <person name="Platzer M."/>
            <person name="Rosenthal A."/>
            <person name="Noegel A.A."/>
        </authorList>
    </citation>
    <scope>NUCLEOTIDE SEQUENCE [LARGE SCALE GENOMIC DNA]</scope>
    <source>
        <strain>AX4</strain>
    </source>
</reference>
<reference key="2">
    <citation type="journal article" date="2005" name="Nature">
        <title>The genome of the social amoeba Dictyostelium discoideum.</title>
        <authorList>
            <person name="Eichinger L."/>
            <person name="Pachebat J.A."/>
            <person name="Gloeckner G."/>
            <person name="Rajandream M.A."/>
            <person name="Sucgang R."/>
            <person name="Berriman M."/>
            <person name="Song J."/>
            <person name="Olsen R."/>
            <person name="Szafranski K."/>
            <person name="Xu Q."/>
            <person name="Tunggal B."/>
            <person name="Kummerfeld S."/>
            <person name="Madera M."/>
            <person name="Konfortov B.A."/>
            <person name="Rivero F."/>
            <person name="Bankier A.T."/>
            <person name="Lehmann R."/>
            <person name="Hamlin N."/>
            <person name="Davies R."/>
            <person name="Gaudet P."/>
            <person name="Fey P."/>
            <person name="Pilcher K."/>
            <person name="Chen G."/>
            <person name="Saunders D."/>
            <person name="Sodergren E.J."/>
            <person name="Davis P."/>
            <person name="Kerhornou A."/>
            <person name="Nie X."/>
            <person name="Hall N."/>
            <person name="Anjard C."/>
            <person name="Hemphill L."/>
            <person name="Bason N."/>
            <person name="Farbrother P."/>
            <person name="Desany B."/>
            <person name="Just E."/>
            <person name="Morio T."/>
            <person name="Rost R."/>
            <person name="Churcher C.M."/>
            <person name="Cooper J."/>
            <person name="Haydock S."/>
            <person name="van Driessche N."/>
            <person name="Cronin A."/>
            <person name="Goodhead I."/>
            <person name="Muzny D.M."/>
            <person name="Mourier T."/>
            <person name="Pain A."/>
            <person name="Lu M."/>
            <person name="Harper D."/>
            <person name="Lindsay R."/>
            <person name="Hauser H."/>
            <person name="James K.D."/>
            <person name="Quiles M."/>
            <person name="Madan Babu M."/>
            <person name="Saito T."/>
            <person name="Buchrieser C."/>
            <person name="Wardroper A."/>
            <person name="Felder M."/>
            <person name="Thangavelu M."/>
            <person name="Johnson D."/>
            <person name="Knights A."/>
            <person name="Loulseged H."/>
            <person name="Mungall K.L."/>
            <person name="Oliver K."/>
            <person name="Price C."/>
            <person name="Quail M.A."/>
            <person name="Urushihara H."/>
            <person name="Hernandez J."/>
            <person name="Rabbinowitsch E."/>
            <person name="Steffen D."/>
            <person name="Sanders M."/>
            <person name="Ma J."/>
            <person name="Kohara Y."/>
            <person name="Sharp S."/>
            <person name="Simmonds M.N."/>
            <person name="Spiegler S."/>
            <person name="Tivey A."/>
            <person name="Sugano S."/>
            <person name="White B."/>
            <person name="Walker D."/>
            <person name="Woodward J.R."/>
            <person name="Winckler T."/>
            <person name="Tanaka Y."/>
            <person name="Shaulsky G."/>
            <person name="Schleicher M."/>
            <person name="Weinstock G.M."/>
            <person name="Rosenthal A."/>
            <person name="Cox E.C."/>
            <person name="Chisholm R.L."/>
            <person name="Gibbs R.A."/>
            <person name="Loomis W.F."/>
            <person name="Platzer M."/>
            <person name="Kay R.R."/>
            <person name="Williams J.G."/>
            <person name="Dear P.H."/>
            <person name="Noegel A.A."/>
            <person name="Barrell B.G."/>
            <person name="Kuspa A."/>
        </authorList>
    </citation>
    <scope>NUCLEOTIDE SEQUENCE [LARGE SCALE GENOMIC DNA]</scope>
    <source>
        <strain>AX4</strain>
    </source>
</reference>
<reference key="3">
    <citation type="journal article" date="2007" name="Bioinformatics">
        <title>Polyketide synthase genes and the natural products potential of Dictyostelium discoideum.</title>
        <authorList>
            <person name="Zucko J."/>
            <person name="Skunca N."/>
            <person name="Curk T."/>
            <person name="Zupan B."/>
            <person name="Long P.F."/>
            <person name="Cullum J."/>
            <person name="Kessin R.H."/>
            <person name="Hranueli D."/>
        </authorList>
    </citation>
    <scope>IDENTIFICATION</scope>
</reference>
<reference key="4">
    <citation type="journal article" date="2008" name="BMC Microbiol.">
        <title>Dictyostelium transcriptional responses to Pseudomonas aeruginosa: common and specific effects from PAO1 and PA14 strains.</title>
        <authorList>
            <person name="Carilla-Latorre S."/>
            <person name="Calvo-Garrido J."/>
            <person name="Bloomfield G."/>
            <person name="Skelton J."/>
            <person name="Kay R.R."/>
            <person name="Ivens A."/>
            <person name="Martinez J.L."/>
            <person name="Escalante R."/>
        </authorList>
    </citation>
    <scope>INDUCTION [LARGE SCALE ANALYSIS]</scope>
</reference>
<sequence length="2512" mass="285270">MDMKLNDIENENFINQMKGVAIVGIGFRIPSGNSENSISSPDDLFNNLKNGFDGVSSTSERWSDNYHKLGEISSPNAGLLPLNEWKSFDPLFFGINPSDAHHIDPQQRLLLKCTWEALEDASIDPISIRGTNTSVFIGSSTIDYLHANKHPDLILKNAIGFSPSTLSNRISYCFDIHGPSLSIDTACSSSMNAVTQGYHSILNGTSNMSIVGGVNFVIDVETIKGFSYLNMLSKTHGKCKAFDESGDGFTRGECAGVVVLKKLDDAIRDGNRIYCIINGISSNIDGNGIADKANFYSPSKQSQFNNINLAFKSTNGKISVNDIQYIEAHGTGTKTGDPIETEAISMAFKNRDKSTPILIGSIKSNIGHCEAGSGVVSLIKCCLMFKYQCFLPNIHFKNPNPLIKFNEWNLKVVTSPIPFNRNNEKSVSMMINNFGVTGSNCCLLISEFKKQDYESYENNIGSINKNILVPFSANSPKSLDQYQSKIKNIINNQFNFIDFANNQIYSKSNYLYQRSVVIANNSNDLVNKILNKKHIQTKNPIISNMSFKGKNPITIFVFSGQGSQYPKMALELYNNEVIFKKSIDLIDSKLSKYYGYSVLEKLRSIGDDDTTSIHDPTIAQPAMCMFSVSLFELYKHWGVNPSFILGHSLGEIPTSYCSGMIDLDTFCYTVYQRSIAQTKTHGNGRMLSINISDEEFKSMYSQKYPQIEIACYNSPQSIVVAGNESILNEISKELKEKEIFTAMLGSLSSFHTSSQQCTKDSILQLNIESKKSKVPTFSTVTTNLFNESDPFNSQYVYDNIINPVKFTQTISNIYKHIESNQLDNDIVFIEIAPHPTLSFYIKQMVPSSLNESVSVYSALHKKKNDVEEFQQTISNLYCQNGYNINFKCQFNNKKSNQKINLPLYQWDDELYFAQTQVLEQHRKEGPPIDHLGLSNSYYSPFKNSYRTFIDIKNKPFQYLKGHMVKGKYYFPGCGYIDNIIQLYKNQDIFISFIEFKTPLILIEGINQCLQTNIQQTGKSEYRAQFHFKDQKSNEWIQSSNANFQLLDHTIEMPPKYNIEEIIKNKCTLARLTKNEIYTHIKSKTGLNYTAMFQGATECYIGVDCTLSVVSIESQTNSFLNIPILDSVFHGNISLINDQCQIVFDKVHGLKYYSSNIPNDYKDKSVYVYAKLKSKTSDSYSASFTVLLSDGTVVYEIDEAFSKSLIPIKELLKIEYPNDELFSINLQPKDSPIPAPSTFKSLIYENDRFNAEPPMVENLFQYISTIFYKNIINRCPEINIDIIKSLSIDEIISNFSKISKHERLFKYVFETIKENGILNSLEEKDDTYFVFNEVLIKSSRVISKLLFPLENDNDNEDTPQLLFQNGLMDKVYKCRYLKNKNQMIAHIIKHSIKEIINNNIIIRILEFGGGTASLSVEVIEEIVTLLQENPNYQVEIEYTWSDISPAFIVDTKNKINKIIKGAGITNGLNVIYHPLTIDESLVELQSIKPSYYDFVIMSNVLHVVKDIKQAVEQMYQLLIPNGQLLFVEPPYKSIICDSLFGSFEQWWAFTDTDIRKDHCCLSQDGWYKLLKWSNFESIEMSTESKFMGSVIQAQKPSFTSLINQQPKYDNIIIFGNNCPNFIDNIKPFSNFNEFIQIETIQEFDQLINKSTITNDSIIYFIKSINQLSLDNYKQATLEYIEINQKLLQINSLCKHVLIVNDSRKTNYLASSIVGAARYFDEFQQLKLHTLDFDYDSTQNYLISKNNKMVQFINNLIDSKTNVHKEMIIINNKVYYEIVQKEKNLKLKYNSESFEQQDNLMCSLSPNLEYQLQSKQIKLRDNQVEVKTIATGINNKDYLVYSGLEGSVNSNTPQFGYEFSGIITRVGNNVKDYKVGDNVFGLSNSCTSSNIIVNHERIQIKPSNISHIEAASIPIDYLTSFMSLFNVGCLNIEDNESILIHLGSDSFGLSTFEILKWKGFKSNLFVTVNSDEIKQYLLNNYGDLITAIYSNTDKGYVSQIKNKLIEQGSNDNGVDLILNTLPSDFMDSNFQLLAINGRIIDLSNDHLNQSEYMKNVNFTLNRGYHNFDLMSQRNSRINRSLLTISKAIENGELKLIPIKEFSNSDINDAIEFIIEENRIDKIVVSHDHEVYQELYAKFSNENDFSILKSNYQINSNNLGKNILITGQSGIILEILKWIIKYSNINTIENVIILSRSSLKWELELLINQTKLSNNNIKFHFKSVDVGDSEQVDNAINEILNENQEIINIHSIFHFAFTQIACKVQEINMKHLDISHGAKTMGAINLHNQSIKRNWKLINFVISSSIASLVGSTDQCSYVCANALLDSFSKYRVSLGLPSTSINLGAIESTGFVSKNESISVFLDGSGIIPTPINQVLGLLDLQIQNPGKFTNSMVAKFNPLNFSNNEQINLLLKMDYIFNLHSNGYTKVKESAGSKNVDELFIKKISDLFSIDESKINKDIRLIDYGADSLVIVQLKNWVDQEIGFNLITIQQLQNNTINVSIKIILNFLKKINK</sequence>
<name>PKS5_DICDI</name>
<dbReference type="EC" id="2.3.1.-"/>
<dbReference type="EMBL" id="AAFI02000006">
    <property type="protein sequence ID" value="EAL71624.1"/>
    <property type="molecule type" value="Genomic_DNA"/>
</dbReference>
<dbReference type="RefSeq" id="XP_645557.1">
    <property type="nucleotide sequence ID" value="XM_640465.1"/>
</dbReference>
<dbReference type="SMR" id="Q86JI5"/>
<dbReference type="FunCoup" id="Q86JI5">
    <property type="interactions" value="1"/>
</dbReference>
<dbReference type="STRING" id="44689.Q86JI5"/>
<dbReference type="PaxDb" id="44689-DDB0235300"/>
<dbReference type="EnsemblProtists" id="EAL71624">
    <property type="protein sequence ID" value="EAL71624"/>
    <property type="gene ID" value="DDB_G0271520"/>
</dbReference>
<dbReference type="GeneID" id="8618014"/>
<dbReference type="KEGG" id="ddi:DDB_G0271520"/>
<dbReference type="dictyBase" id="DDB_G0271520">
    <property type="gene designation" value="pks5"/>
</dbReference>
<dbReference type="VEuPathDB" id="AmoebaDB:DDB_G0271520"/>
<dbReference type="eggNOG" id="KOG1202">
    <property type="taxonomic scope" value="Eukaryota"/>
</dbReference>
<dbReference type="HOGENOM" id="CLU_000022_31_0_1"/>
<dbReference type="InParanoid" id="Q86JI5"/>
<dbReference type="PhylomeDB" id="Q86JI5"/>
<dbReference type="PRO" id="PR:Q86JI5"/>
<dbReference type="Proteomes" id="UP000002195">
    <property type="component" value="Chromosome 2"/>
</dbReference>
<dbReference type="GO" id="GO:0004315">
    <property type="term" value="F:3-oxoacyl-[acyl-carrier-protein] synthase activity"/>
    <property type="evidence" value="ECO:0007669"/>
    <property type="project" value="InterPro"/>
</dbReference>
<dbReference type="GO" id="GO:0016491">
    <property type="term" value="F:oxidoreductase activity"/>
    <property type="evidence" value="ECO:0007669"/>
    <property type="project" value="InterPro"/>
</dbReference>
<dbReference type="GO" id="GO:0006633">
    <property type="term" value="P:fatty acid biosynthetic process"/>
    <property type="evidence" value="ECO:0000315"/>
    <property type="project" value="dictyBase"/>
</dbReference>
<dbReference type="GO" id="GO:0048837">
    <property type="term" value="P:sorocarp sorus development"/>
    <property type="evidence" value="ECO:0000315"/>
    <property type="project" value="dictyBase"/>
</dbReference>
<dbReference type="CDD" id="cd05195">
    <property type="entry name" value="enoyl_red"/>
    <property type="match status" value="1"/>
</dbReference>
<dbReference type="CDD" id="cd08954">
    <property type="entry name" value="KR_1_FAS_SDR_x"/>
    <property type="match status" value="1"/>
</dbReference>
<dbReference type="CDD" id="cd00833">
    <property type="entry name" value="PKS"/>
    <property type="match status" value="1"/>
</dbReference>
<dbReference type="Gene3D" id="3.30.70.3290">
    <property type="match status" value="1"/>
</dbReference>
<dbReference type="Gene3D" id="3.40.47.10">
    <property type="match status" value="1"/>
</dbReference>
<dbReference type="Gene3D" id="3.40.366.10">
    <property type="entry name" value="Malonyl-Coenzyme A Acyl Carrier Protein, domain 2"/>
    <property type="match status" value="1"/>
</dbReference>
<dbReference type="Gene3D" id="3.90.180.10">
    <property type="entry name" value="Medium-chain alcohol dehydrogenases, catalytic domain"/>
    <property type="match status" value="1"/>
</dbReference>
<dbReference type="Gene3D" id="3.40.50.720">
    <property type="entry name" value="NAD(P)-binding Rossmann-like Domain"/>
    <property type="match status" value="2"/>
</dbReference>
<dbReference type="Gene3D" id="3.10.129.110">
    <property type="entry name" value="Polyketide synthase dehydratase"/>
    <property type="match status" value="1"/>
</dbReference>
<dbReference type="Gene3D" id="3.40.50.150">
    <property type="entry name" value="Vaccinia Virus protein VP39"/>
    <property type="match status" value="1"/>
</dbReference>
<dbReference type="InterPro" id="IPR001227">
    <property type="entry name" value="Ac_transferase_dom_sf"/>
</dbReference>
<dbReference type="InterPro" id="IPR036736">
    <property type="entry name" value="ACP-like_sf"/>
</dbReference>
<dbReference type="InterPro" id="IPR014043">
    <property type="entry name" value="Acyl_transferase_dom"/>
</dbReference>
<dbReference type="InterPro" id="IPR016035">
    <property type="entry name" value="Acyl_Trfase/lysoPLipase"/>
</dbReference>
<dbReference type="InterPro" id="IPR013154">
    <property type="entry name" value="ADH-like_N"/>
</dbReference>
<dbReference type="InterPro" id="IPR011032">
    <property type="entry name" value="GroES-like_sf"/>
</dbReference>
<dbReference type="InterPro" id="IPR018201">
    <property type="entry name" value="Ketoacyl_synth_AS"/>
</dbReference>
<dbReference type="InterPro" id="IPR014031">
    <property type="entry name" value="Ketoacyl_synth_C"/>
</dbReference>
<dbReference type="InterPro" id="IPR014030">
    <property type="entry name" value="Ketoacyl_synth_N"/>
</dbReference>
<dbReference type="InterPro" id="IPR016036">
    <property type="entry name" value="Malonyl_transacylase_ACP-bd"/>
</dbReference>
<dbReference type="InterPro" id="IPR013217">
    <property type="entry name" value="Methyltransf_12"/>
</dbReference>
<dbReference type="InterPro" id="IPR036291">
    <property type="entry name" value="NAD(P)-bd_dom_sf"/>
</dbReference>
<dbReference type="InterPro" id="IPR032821">
    <property type="entry name" value="PKS_assoc"/>
</dbReference>
<dbReference type="InterPro" id="IPR020841">
    <property type="entry name" value="PKS_Beta-ketoAc_synthase_dom"/>
</dbReference>
<dbReference type="InterPro" id="IPR042104">
    <property type="entry name" value="PKS_dehydratase_sf"/>
</dbReference>
<dbReference type="InterPro" id="IPR020843">
    <property type="entry name" value="PKS_ER"/>
</dbReference>
<dbReference type="InterPro" id="IPR013968">
    <property type="entry name" value="PKS_KR"/>
</dbReference>
<dbReference type="InterPro" id="IPR049900">
    <property type="entry name" value="PKS_mFAS_DH"/>
</dbReference>
<dbReference type="InterPro" id="IPR050444">
    <property type="entry name" value="Polyketide_Synthase"/>
</dbReference>
<dbReference type="InterPro" id="IPR009081">
    <property type="entry name" value="PP-bd_ACP"/>
</dbReference>
<dbReference type="InterPro" id="IPR029063">
    <property type="entry name" value="SAM-dependent_MTases_sf"/>
</dbReference>
<dbReference type="InterPro" id="IPR016039">
    <property type="entry name" value="Thiolase-like"/>
</dbReference>
<dbReference type="PANTHER" id="PTHR45681:SF4">
    <property type="entry name" value="BETA-KETOACYL SYNTHASE FAMILY PROTEIN-RELATED"/>
    <property type="match status" value="1"/>
</dbReference>
<dbReference type="PANTHER" id="PTHR45681">
    <property type="entry name" value="POLYKETIDE SYNTHASE 44-RELATED"/>
    <property type="match status" value="1"/>
</dbReference>
<dbReference type="Pfam" id="PF23297">
    <property type="entry name" value="ACP_SdgA_C"/>
    <property type="match status" value="1"/>
</dbReference>
<dbReference type="Pfam" id="PF00698">
    <property type="entry name" value="Acyl_transf_1"/>
    <property type="match status" value="1"/>
</dbReference>
<dbReference type="Pfam" id="PF08240">
    <property type="entry name" value="ADH_N"/>
    <property type="match status" value="1"/>
</dbReference>
<dbReference type="Pfam" id="PF16197">
    <property type="entry name" value="KAsynt_C_assoc"/>
    <property type="match status" value="1"/>
</dbReference>
<dbReference type="Pfam" id="PF00109">
    <property type="entry name" value="ketoacyl-synt"/>
    <property type="match status" value="1"/>
</dbReference>
<dbReference type="Pfam" id="PF02801">
    <property type="entry name" value="Ketoacyl-synt_C"/>
    <property type="match status" value="1"/>
</dbReference>
<dbReference type="Pfam" id="PF08659">
    <property type="entry name" value="KR"/>
    <property type="match status" value="1"/>
</dbReference>
<dbReference type="Pfam" id="PF08242">
    <property type="entry name" value="Methyltransf_12"/>
    <property type="match status" value="1"/>
</dbReference>
<dbReference type="SMART" id="SM00827">
    <property type="entry name" value="PKS_AT"/>
    <property type="match status" value="1"/>
</dbReference>
<dbReference type="SMART" id="SM00829">
    <property type="entry name" value="PKS_ER"/>
    <property type="match status" value="1"/>
</dbReference>
<dbReference type="SMART" id="SM00822">
    <property type="entry name" value="PKS_KR"/>
    <property type="match status" value="1"/>
</dbReference>
<dbReference type="SMART" id="SM00825">
    <property type="entry name" value="PKS_KS"/>
    <property type="match status" value="1"/>
</dbReference>
<dbReference type="SUPFAM" id="SSF47336">
    <property type="entry name" value="ACP-like"/>
    <property type="match status" value="1"/>
</dbReference>
<dbReference type="SUPFAM" id="SSF52151">
    <property type="entry name" value="FabD/lysophospholipase-like"/>
    <property type="match status" value="1"/>
</dbReference>
<dbReference type="SUPFAM" id="SSF50129">
    <property type="entry name" value="GroES-like"/>
    <property type="match status" value="1"/>
</dbReference>
<dbReference type="SUPFAM" id="SSF51735">
    <property type="entry name" value="NAD(P)-binding Rossmann-fold domains"/>
    <property type="match status" value="2"/>
</dbReference>
<dbReference type="SUPFAM" id="SSF55048">
    <property type="entry name" value="Probable ACP-binding domain of malonyl-CoA ACP transacylase"/>
    <property type="match status" value="1"/>
</dbReference>
<dbReference type="SUPFAM" id="SSF53335">
    <property type="entry name" value="S-adenosyl-L-methionine-dependent methyltransferases"/>
    <property type="match status" value="1"/>
</dbReference>
<dbReference type="SUPFAM" id="SSF53901">
    <property type="entry name" value="Thiolase-like"/>
    <property type="match status" value="1"/>
</dbReference>
<dbReference type="PROSITE" id="PS50075">
    <property type="entry name" value="CARRIER"/>
    <property type="match status" value="1"/>
</dbReference>
<dbReference type="PROSITE" id="PS00606">
    <property type="entry name" value="KS3_1"/>
    <property type="match status" value="1"/>
</dbReference>
<dbReference type="PROSITE" id="PS52004">
    <property type="entry name" value="KS3_2"/>
    <property type="match status" value="1"/>
</dbReference>
<dbReference type="PROSITE" id="PS52019">
    <property type="entry name" value="PKS_MFAS_DH"/>
    <property type="match status" value="1"/>
</dbReference>
<proteinExistence type="evidence at transcript level"/>
<keyword id="KW-0596">Phosphopantetheine</keyword>
<keyword id="KW-0597">Phosphoprotein</keyword>
<keyword id="KW-1185">Reference proteome</keyword>
<keyword id="KW-0808">Transferase</keyword>
<comment type="function">
    <text evidence="1">Probable polyketide synthase.</text>
</comment>
<comment type="cofactor">
    <cofactor evidence="1">
        <name>pantetheine 4'-phosphate</name>
        <dbReference type="ChEBI" id="CHEBI:47942"/>
    </cofactor>
    <text evidence="1">Binds 1 phosphopantetheine covalently.</text>
</comment>
<comment type="induction">
    <text evidence="6">Up-regulated by P.aeruginosa, PAO1 strain and PA14 strain infection.</text>
</comment>
<comment type="domain">
    <text evidence="1">Modular protein that is responsible for the completion of one condensation-processing cycle. The beta-ketoacyl synthase region is responsible for the actual condensation reaction while the acyl/malonyl transferase region is responsible for incorporating carboxylic acids units onto an acyl carrier protein (ACP) domain (By similarity).</text>
</comment>
<comment type="miscellaneous">
    <text>Encoded by one of the numerous copies of polyketide synthase genes and clustered as a quintuplet pks5/pks6/pks7/pks8/pks9 in chromosome 2.</text>
</comment>
<accession>Q86JI5</accession>
<accession>Q55AY9</accession>
<feature type="chain" id="PRO_0000376880" description="Probable polyketide synthase 5">
    <location>
        <begin position="1"/>
        <end position="2512"/>
    </location>
</feature>
<feature type="domain" description="Ketosynthase family 3 (KS3)" evidence="3">
    <location>
        <begin position="17"/>
        <end position="447"/>
    </location>
</feature>
<feature type="domain" description="PKS/mFAS DH" evidence="4">
    <location>
        <begin position="928"/>
        <end position="1210"/>
    </location>
</feature>
<feature type="domain" description="Carrier" evidence="2">
    <location>
        <begin position="2430"/>
        <end position="2507"/>
    </location>
</feature>
<feature type="region of interest" description="Acyl/malonyl transferase">
    <location>
        <begin position="638"/>
        <end position="671"/>
    </location>
</feature>
<feature type="region of interest" description="N-terminal hotdog fold" evidence="4">
    <location>
        <begin position="928"/>
        <end position="1050"/>
    </location>
</feature>
<feature type="region of interest" description="C-terminal hotdog fold" evidence="4">
    <location>
        <begin position="1067"/>
        <end position="1210"/>
    </location>
</feature>
<feature type="active site" description="For beta-ketoacyl synthase activity" evidence="3">
    <location>
        <position position="187"/>
    </location>
</feature>
<feature type="active site" description="For beta-ketoacyl synthase activity" evidence="3">
    <location>
        <position position="329"/>
    </location>
</feature>
<feature type="active site" description="For beta-ketoacyl synthase activity" evidence="3">
    <location>
        <position position="368"/>
    </location>
</feature>
<feature type="active site" description="For acyl/malonyl transferase activity" evidence="5">
    <location>
        <position position="648"/>
    </location>
</feature>
<feature type="active site" description="Proton acceptor; for dehydratase activity" evidence="4">
    <location>
        <position position="962"/>
    </location>
</feature>
<feature type="active site" description="Proton donor; for dehydratase activity" evidence="4">
    <location>
        <position position="1125"/>
    </location>
</feature>
<feature type="modified residue" description="O-(pantetheine 4'-phosphoryl)serine" evidence="2">
    <location>
        <position position="2467"/>
    </location>
</feature>
<protein>
    <recommendedName>
        <fullName>Probable polyketide synthase 5</fullName>
        <shortName>dipks5</shortName>
        <ecNumber>2.3.1.-</ecNumber>
    </recommendedName>
</protein>
<organism>
    <name type="scientific">Dictyostelium discoideum</name>
    <name type="common">Social amoeba</name>
    <dbReference type="NCBI Taxonomy" id="44689"/>
    <lineage>
        <taxon>Eukaryota</taxon>
        <taxon>Amoebozoa</taxon>
        <taxon>Evosea</taxon>
        <taxon>Eumycetozoa</taxon>
        <taxon>Dictyostelia</taxon>
        <taxon>Dictyosteliales</taxon>
        <taxon>Dictyosteliaceae</taxon>
        <taxon>Dictyostelium</taxon>
    </lineage>
</organism>